<comment type="function">
    <text evidence="1">Is required not only for elongation of protein synthesis but also for the initiation of all mRNA translation through initiator tRNA(fMet) aminoacylation.</text>
</comment>
<comment type="catalytic activity">
    <reaction evidence="1">
        <text>tRNA(Met) + L-methionine + ATP = L-methionyl-tRNA(Met) + AMP + diphosphate</text>
        <dbReference type="Rhea" id="RHEA:13481"/>
        <dbReference type="Rhea" id="RHEA-COMP:9667"/>
        <dbReference type="Rhea" id="RHEA-COMP:9698"/>
        <dbReference type="ChEBI" id="CHEBI:30616"/>
        <dbReference type="ChEBI" id="CHEBI:33019"/>
        <dbReference type="ChEBI" id="CHEBI:57844"/>
        <dbReference type="ChEBI" id="CHEBI:78442"/>
        <dbReference type="ChEBI" id="CHEBI:78530"/>
        <dbReference type="ChEBI" id="CHEBI:456215"/>
        <dbReference type="EC" id="6.1.1.10"/>
    </reaction>
</comment>
<comment type="cofactor">
    <cofactor evidence="1">
        <name>Zn(2+)</name>
        <dbReference type="ChEBI" id="CHEBI:29105"/>
    </cofactor>
    <text evidence="1">Binds 1 zinc ion per subunit.</text>
</comment>
<comment type="subunit">
    <text evidence="1">Homodimer.</text>
</comment>
<comment type="subcellular location">
    <subcellularLocation>
        <location evidence="1">Cytoplasm</location>
    </subcellularLocation>
</comment>
<comment type="similarity">
    <text evidence="1">Belongs to the class-I aminoacyl-tRNA synthetase family. MetG type 1 subfamily.</text>
</comment>
<accession>B5RPT6</accession>
<sequence>MQKKNLITAALPYVNNIPHLGNLVQVLSADAFARYSRMMGIETLYVCGTDEYGTATETKALIEKTTPEELCNKYHAIHKSIYEWFNIKFDIFGRTTNKYHKETVQDLFLKLDKNGYITEKENEQFFCQQDQMFLADRYVTGECPNCGNNTKGDQCENCSNLLVTNELLNPRCIICKNIPIIKKTKHLYIDLPKIKNELEHWIQQIDQNTNWNINAIKITNAFLRDGLKERTITRDLKWGIPVPKKEYENKVFYVWFDAPIGYISITKEIIKDWESWWKNNEDTNLIQFIGKDNILFHTIMFPSIELGSQENWTMLNKLASSEYLNYENLKFSKSAGTGIFGNDVITTEIPSDVWRFYIYYNRPEKADFQFMWDDFMERINSELIGNFSNLINRVLTFYKKFFGDKIDKIELNENFWQIVNIKYERTINFFKQIELKAALKEILDISRIGNKIFQDKEPWKTKNSTPQTTKELLLNLIYLIRDLSILISPFMPHTSDRIRSFFGKSYEISNKFLGTNLGLTTIQSTEVLFTKLEKQLIDSLKLKYSGRTNMQDEKNKNSINLFSEQICLKTVKIKTIDRNPDAEKLFILKLDDGTPEGKQIVSSIADHYTEEELIGKHIIIVDNLKPAKFRGIRSEGMLIATKDENKNFKIIIVEDFKDNPIPGERVILESDTGKELKSPTKISIDKFLQAQIVAENGELKINGINLILEHSKEKVLSKEIPNGKIY</sequence>
<evidence type="ECO:0000255" key="1">
    <source>
        <dbReference type="HAMAP-Rule" id="MF_00098"/>
    </source>
</evidence>
<gene>
    <name evidence="1" type="primary">metG</name>
    <name type="ordered locus">BRE_592</name>
</gene>
<proteinExistence type="inferred from homology"/>
<protein>
    <recommendedName>
        <fullName evidence="1">Methionine--tRNA ligase</fullName>
        <ecNumber evidence="1">6.1.1.10</ecNumber>
    </recommendedName>
    <alternativeName>
        <fullName evidence="1">Methionyl-tRNA synthetase</fullName>
        <shortName evidence="1">MetRS</shortName>
    </alternativeName>
</protein>
<reference key="1">
    <citation type="journal article" date="2008" name="PLoS Genet.">
        <title>The genome of Borrelia recurrentis, the agent of deadly louse-borne relapsing fever, is a degraded subset of tick-borne Borrelia duttonii.</title>
        <authorList>
            <person name="Lescot M."/>
            <person name="Audic S."/>
            <person name="Robert C."/>
            <person name="Nguyen T.T."/>
            <person name="Blanc G."/>
            <person name="Cutler S.J."/>
            <person name="Wincker P."/>
            <person name="Couloux A."/>
            <person name="Claverie J.-M."/>
            <person name="Raoult D."/>
            <person name="Drancourt M."/>
        </authorList>
    </citation>
    <scope>NUCLEOTIDE SEQUENCE [LARGE SCALE GENOMIC DNA]</scope>
    <source>
        <strain>A1</strain>
    </source>
</reference>
<organism>
    <name type="scientific">Borrelia recurrentis (strain A1)</name>
    <dbReference type="NCBI Taxonomy" id="412418"/>
    <lineage>
        <taxon>Bacteria</taxon>
        <taxon>Pseudomonadati</taxon>
        <taxon>Spirochaetota</taxon>
        <taxon>Spirochaetia</taxon>
        <taxon>Spirochaetales</taxon>
        <taxon>Borreliaceae</taxon>
        <taxon>Borrelia</taxon>
    </lineage>
</organism>
<keyword id="KW-0030">Aminoacyl-tRNA synthetase</keyword>
<keyword id="KW-0067">ATP-binding</keyword>
<keyword id="KW-0963">Cytoplasm</keyword>
<keyword id="KW-0436">Ligase</keyword>
<keyword id="KW-0479">Metal-binding</keyword>
<keyword id="KW-0547">Nucleotide-binding</keyword>
<keyword id="KW-0648">Protein biosynthesis</keyword>
<keyword id="KW-0694">RNA-binding</keyword>
<keyword id="KW-0820">tRNA-binding</keyword>
<keyword id="KW-0862">Zinc</keyword>
<feature type="chain" id="PRO_1000093699" description="Methionine--tRNA ligase">
    <location>
        <begin position="1"/>
        <end position="726"/>
    </location>
</feature>
<feature type="domain" description="tRNA-binding" evidence="1">
    <location>
        <begin position="562"/>
        <end position="667"/>
    </location>
</feature>
<feature type="short sequence motif" description="'HIGH' region">
    <location>
        <begin position="12"/>
        <end position="22"/>
    </location>
</feature>
<feature type="short sequence motif" description="'KMSKS' region">
    <location>
        <begin position="330"/>
        <end position="334"/>
    </location>
</feature>
<feature type="binding site" evidence="1">
    <location>
        <position position="143"/>
    </location>
    <ligand>
        <name>Zn(2+)</name>
        <dbReference type="ChEBI" id="CHEBI:29105"/>
    </ligand>
</feature>
<feature type="binding site" evidence="1">
    <location>
        <position position="146"/>
    </location>
    <ligand>
        <name>Zn(2+)</name>
        <dbReference type="ChEBI" id="CHEBI:29105"/>
    </ligand>
</feature>
<feature type="binding site" evidence="1">
    <location>
        <position position="155"/>
    </location>
    <ligand>
        <name>Zn(2+)</name>
        <dbReference type="ChEBI" id="CHEBI:29105"/>
    </ligand>
</feature>
<feature type="binding site" evidence="1">
    <location>
        <position position="158"/>
    </location>
    <ligand>
        <name>Zn(2+)</name>
        <dbReference type="ChEBI" id="CHEBI:29105"/>
    </ligand>
</feature>
<feature type="binding site" evidence="1">
    <location>
        <position position="333"/>
    </location>
    <ligand>
        <name>ATP</name>
        <dbReference type="ChEBI" id="CHEBI:30616"/>
    </ligand>
</feature>
<dbReference type="EC" id="6.1.1.10" evidence="1"/>
<dbReference type="EMBL" id="CP000993">
    <property type="protein sequence ID" value="ACH94820.1"/>
    <property type="molecule type" value="Genomic_DNA"/>
</dbReference>
<dbReference type="SMR" id="B5RPT6"/>
<dbReference type="KEGG" id="bre:BRE_592"/>
<dbReference type="HOGENOM" id="CLU_009710_1_0_12"/>
<dbReference type="Proteomes" id="UP000000612">
    <property type="component" value="Chromosome"/>
</dbReference>
<dbReference type="GO" id="GO:0017101">
    <property type="term" value="C:aminoacyl-tRNA synthetase multienzyme complex"/>
    <property type="evidence" value="ECO:0007669"/>
    <property type="project" value="TreeGrafter"/>
</dbReference>
<dbReference type="GO" id="GO:0005829">
    <property type="term" value="C:cytosol"/>
    <property type="evidence" value="ECO:0007669"/>
    <property type="project" value="TreeGrafter"/>
</dbReference>
<dbReference type="GO" id="GO:0005524">
    <property type="term" value="F:ATP binding"/>
    <property type="evidence" value="ECO:0007669"/>
    <property type="project" value="UniProtKB-UniRule"/>
</dbReference>
<dbReference type="GO" id="GO:0046872">
    <property type="term" value="F:metal ion binding"/>
    <property type="evidence" value="ECO:0007669"/>
    <property type="project" value="UniProtKB-KW"/>
</dbReference>
<dbReference type="GO" id="GO:0004825">
    <property type="term" value="F:methionine-tRNA ligase activity"/>
    <property type="evidence" value="ECO:0007669"/>
    <property type="project" value="UniProtKB-UniRule"/>
</dbReference>
<dbReference type="GO" id="GO:0000049">
    <property type="term" value="F:tRNA binding"/>
    <property type="evidence" value="ECO:0007669"/>
    <property type="project" value="UniProtKB-KW"/>
</dbReference>
<dbReference type="GO" id="GO:0006431">
    <property type="term" value="P:methionyl-tRNA aminoacylation"/>
    <property type="evidence" value="ECO:0007669"/>
    <property type="project" value="UniProtKB-UniRule"/>
</dbReference>
<dbReference type="CDD" id="cd07957">
    <property type="entry name" value="Anticodon_Ia_Met"/>
    <property type="match status" value="1"/>
</dbReference>
<dbReference type="CDD" id="cd00814">
    <property type="entry name" value="MetRS_core"/>
    <property type="match status" value="1"/>
</dbReference>
<dbReference type="CDD" id="cd02153">
    <property type="entry name" value="tRNA_bindingDomain"/>
    <property type="match status" value="1"/>
</dbReference>
<dbReference type="Gene3D" id="3.40.50.620">
    <property type="entry name" value="HUPs"/>
    <property type="match status" value="1"/>
</dbReference>
<dbReference type="Gene3D" id="1.10.730.10">
    <property type="entry name" value="Isoleucyl-tRNA Synthetase, Domain 1"/>
    <property type="match status" value="1"/>
</dbReference>
<dbReference type="Gene3D" id="2.20.28.20">
    <property type="entry name" value="Methionyl-tRNA synthetase, Zn-domain"/>
    <property type="match status" value="1"/>
</dbReference>
<dbReference type="Gene3D" id="2.40.50.140">
    <property type="entry name" value="Nucleic acid-binding proteins"/>
    <property type="match status" value="1"/>
</dbReference>
<dbReference type="HAMAP" id="MF_00098">
    <property type="entry name" value="Met_tRNA_synth_type1"/>
    <property type="match status" value="1"/>
</dbReference>
<dbReference type="InterPro" id="IPR001412">
    <property type="entry name" value="aa-tRNA-synth_I_CS"/>
</dbReference>
<dbReference type="InterPro" id="IPR041872">
    <property type="entry name" value="Anticodon_Met"/>
</dbReference>
<dbReference type="InterPro" id="IPR023458">
    <property type="entry name" value="Met-tRNA_ligase_1"/>
</dbReference>
<dbReference type="InterPro" id="IPR014758">
    <property type="entry name" value="Met-tRNA_synth"/>
</dbReference>
<dbReference type="InterPro" id="IPR015413">
    <property type="entry name" value="Methionyl/Leucyl_tRNA_Synth"/>
</dbReference>
<dbReference type="InterPro" id="IPR033911">
    <property type="entry name" value="MetRS_core"/>
</dbReference>
<dbReference type="InterPro" id="IPR029038">
    <property type="entry name" value="MetRS_Zn"/>
</dbReference>
<dbReference type="InterPro" id="IPR012340">
    <property type="entry name" value="NA-bd_OB-fold"/>
</dbReference>
<dbReference type="InterPro" id="IPR014729">
    <property type="entry name" value="Rossmann-like_a/b/a_fold"/>
</dbReference>
<dbReference type="InterPro" id="IPR002547">
    <property type="entry name" value="tRNA-bd_dom"/>
</dbReference>
<dbReference type="InterPro" id="IPR009080">
    <property type="entry name" value="tRNAsynth_Ia_anticodon-bd"/>
</dbReference>
<dbReference type="NCBIfam" id="TIGR00398">
    <property type="entry name" value="metG"/>
    <property type="match status" value="1"/>
</dbReference>
<dbReference type="NCBIfam" id="NF001100">
    <property type="entry name" value="PRK00133.1"/>
    <property type="match status" value="1"/>
</dbReference>
<dbReference type="PANTHER" id="PTHR45765">
    <property type="entry name" value="METHIONINE--TRNA LIGASE"/>
    <property type="match status" value="1"/>
</dbReference>
<dbReference type="PANTHER" id="PTHR45765:SF1">
    <property type="entry name" value="METHIONINE--TRNA LIGASE, CYTOPLASMIC"/>
    <property type="match status" value="1"/>
</dbReference>
<dbReference type="Pfam" id="PF19303">
    <property type="entry name" value="Anticodon_3"/>
    <property type="match status" value="1"/>
</dbReference>
<dbReference type="Pfam" id="PF09334">
    <property type="entry name" value="tRNA-synt_1g"/>
    <property type="match status" value="1"/>
</dbReference>
<dbReference type="Pfam" id="PF01588">
    <property type="entry name" value="tRNA_bind"/>
    <property type="match status" value="1"/>
</dbReference>
<dbReference type="PRINTS" id="PR01041">
    <property type="entry name" value="TRNASYNTHMET"/>
</dbReference>
<dbReference type="SUPFAM" id="SSF47323">
    <property type="entry name" value="Anticodon-binding domain of a subclass of class I aminoacyl-tRNA synthetases"/>
    <property type="match status" value="1"/>
</dbReference>
<dbReference type="SUPFAM" id="SSF57770">
    <property type="entry name" value="Methionyl-tRNA synthetase (MetRS), Zn-domain"/>
    <property type="match status" value="1"/>
</dbReference>
<dbReference type="SUPFAM" id="SSF50249">
    <property type="entry name" value="Nucleic acid-binding proteins"/>
    <property type="match status" value="1"/>
</dbReference>
<dbReference type="SUPFAM" id="SSF52374">
    <property type="entry name" value="Nucleotidylyl transferase"/>
    <property type="match status" value="1"/>
</dbReference>
<dbReference type="PROSITE" id="PS00178">
    <property type="entry name" value="AA_TRNA_LIGASE_I"/>
    <property type="match status" value="1"/>
</dbReference>
<dbReference type="PROSITE" id="PS50886">
    <property type="entry name" value="TRBD"/>
    <property type="match status" value="1"/>
</dbReference>
<name>SYM_BORRA</name>